<proteinExistence type="inferred from homology"/>
<keyword id="KW-0687">Ribonucleoprotein</keyword>
<keyword id="KW-0689">Ribosomal protein</keyword>
<keyword id="KW-0694">RNA-binding</keyword>
<keyword id="KW-0699">rRNA-binding</keyword>
<reference key="1">
    <citation type="submission" date="2008-02" db="EMBL/GenBank/DDBJ databases">
        <title>Complete sequence of Pseudomonas putida W619.</title>
        <authorList>
            <person name="Copeland A."/>
            <person name="Lucas S."/>
            <person name="Lapidus A."/>
            <person name="Barry K."/>
            <person name="Detter J.C."/>
            <person name="Glavina del Rio T."/>
            <person name="Dalin E."/>
            <person name="Tice H."/>
            <person name="Pitluck S."/>
            <person name="Chain P."/>
            <person name="Malfatti S."/>
            <person name="Shin M."/>
            <person name="Vergez L."/>
            <person name="Schmutz J."/>
            <person name="Larimer F."/>
            <person name="Land M."/>
            <person name="Hauser L."/>
            <person name="Kyrpides N."/>
            <person name="Kim E."/>
            <person name="Taghavi S."/>
            <person name="Vangronsveld D."/>
            <person name="van der Lelie D."/>
            <person name="Richardson P."/>
        </authorList>
    </citation>
    <scope>NUCLEOTIDE SEQUENCE [LARGE SCALE GENOMIC DNA]</scope>
    <source>
        <strain>W619</strain>
    </source>
</reference>
<feature type="chain" id="PRO_1000126957" description="Large ribosomal subunit protein bL9">
    <location>
        <begin position="1"/>
        <end position="148"/>
    </location>
</feature>
<comment type="function">
    <text evidence="1">Binds to the 23S rRNA.</text>
</comment>
<comment type="similarity">
    <text evidence="1">Belongs to the bacterial ribosomal protein bL9 family.</text>
</comment>
<gene>
    <name evidence="1" type="primary">rplI</name>
    <name type="ordered locus">PputW619_4665</name>
</gene>
<evidence type="ECO:0000255" key="1">
    <source>
        <dbReference type="HAMAP-Rule" id="MF_00503"/>
    </source>
</evidence>
<evidence type="ECO:0000305" key="2"/>
<sequence>MELILLEKVANLGNLGDKVKVKAGYGRNFLLPFGKATVANAANLAAFEERRAELEKAAADRKSSAESRAAQLAELEVTITATAGDEGKLFGSIGTHDIADALTASGVEVAKAEVRLPNGTIRQVGEYDVAVHLHSDVEATVRVVVVAA</sequence>
<name>RL9_PSEPW</name>
<accession>B1JAG8</accession>
<protein>
    <recommendedName>
        <fullName evidence="1">Large ribosomal subunit protein bL9</fullName>
    </recommendedName>
    <alternativeName>
        <fullName evidence="2">50S ribosomal protein L9</fullName>
    </alternativeName>
</protein>
<dbReference type="EMBL" id="CP000949">
    <property type="protein sequence ID" value="ACA75145.1"/>
    <property type="molecule type" value="Genomic_DNA"/>
</dbReference>
<dbReference type="SMR" id="B1JAG8"/>
<dbReference type="STRING" id="390235.PputW619_4665"/>
<dbReference type="KEGG" id="ppw:PputW619_4665"/>
<dbReference type="eggNOG" id="COG0359">
    <property type="taxonomic scope" value="Bacteria"/>
</dbReference>
<dbReference type="HOGENOM" id="CLU_078938_4_1_6"/>
<dbReference type="OrthoDB" id="9788336at2"/>
<dbReference type="GO" id="GO:1990904">
    <property type="term" value="C:ribonucleoprotein complex"/>
    <property type="evidence" value="ECO:0007669"/>
    <property type="project" value="UniProtKB-KW"/>
</dbReference>
<dbReference type="GO" id="GO:0005840">
    <property type="term" value="C:ribosome"/>
    <property type="evidence" value="ECO:0007669"/>
    <property type="project" value="UniProtKB-KW"/>
</dbReference>
<dbReference type="GO" id="GO:0019843">
    <property type="term" value="F:rRNA binding"/>
    <property type="evidence" value="ECO:0007669"/>
    <property type="project" value="UniProtKB-UniRule"/>
</dbReference>
<dbReference type="GO" id="GO:0003735">
    <property type="term" value="F:structural constituent of ribosome"/>
    <property type="evidence" value="ECO:0007669"/>
    <property type="project" value="InterPro"/>
</dbReference>
<dbReference type="GO" id="GO:0006412">
    <property type="term" value="P:translation"/>
    <property type="evidence" value="ECO:0007669"/>
    <property type="project" value="UniProtKB-UniRule"/>
</dbReference>
<dbReference type="Gene3D" id="3.10.430.100">
    <property type="entry name" value="Ribosomal protein L9, C-terminal domain"/>
    <property type="match status" value="1"/>
</dbReference>
<dbReference type="Gene3D" id="3.40.5.10">
    <property type="entry name" value="Ribosomal protein L9, N-terminal domain"/>
    <property type="match status" value="1"/>
</dbReference>
<dbReference type="HAMAP" id="MF_00503">
    <property type="entry name" value="Ribosomal_bL9"/>
    <property type="match status" value="1"/>
</dbReference>
<dbReference type="InterPro" id="IPR000244">
    <property type="entry name" value="Ribosomal_bL9"/>
</dbReference>
<dbReference type="InterPro" id="IPR009027">
    <property type="entry name" value="Ribosomal_bL9/RNase_H1_N"/>
</dbReference>
<dbReference type="InterPro" id="IPR020594">
    <property type="entry name" value="Ribosomal_bL9_bac/chp"/>
</dbReference>
<dbReference type="InterPro" id="IPR020069">
    <property type="entry name" value="Ribosomal_bL9_C"/>
</dbReference>
<dbReference type="InterPro" id="IPR036791">
    <property type="entry name" value="Ribosomal_bL9_C_sf"/>
</dbReference>
<dbReference type="InterPro" id="IPR020070">
    <property type="entry name" value="Ribosomal_bL9_N"/>
</dbReference>
<dbReference type="InterPro" id="IPR036935">
    <property type="entry name" value="Ribosomal_bL9_N_sf"/>
</dbReference>
<dbReference type="NCBIfam" id="TIGR00158">
    <property type="entry name" value="L9"/>
    <property type="match status" value="1"/>
</dbReference>
<dbReference type="PANTHER" id="PTHR21368">
    <property type="entry name" value="50S RIBOSOMAL PROTEIN L9"/>
    <property type="match status" value="1"/>
</dbReference>
<dbReference type="Pfam" id="PF03948">
    <property type="entry name" value="Ribosomal_L9_C"/>
    <property type="match status" value="1"/>
</dbReference>
<dbReference type="Pfam" id="PF01281">
    <property type="entry name" value="Ribosomal_L9_N"/>
    <property type="match status" value="1"/>
</dbReference>
<dbReference type="SUPFAM" id="SSF55658">
    <property type="entry name" value="L9 N-domain-like"/>
    <property type="match status" value="1"/>
</dbReference>
<dbReference type="SUPFAM" id="SSF55653">
    <property type="entry name" value="Ribosomal protein L9 C-domain"/>
    <property type="match status" value="1"/>
</dbReference>
<dbReference type="PROSITE" id="PS00651">
    <property type="entry name" value="RIBOSOMAL_L9"/>
    <property type="match status" value="1"/>
</dbReference>
<organism>
    <name type="scientific">Pseudomonas putida (strain W619)</name>
    <dbReference type="NCBI Taxonomy" id="390235"/>
    <lineage>
        <taxon>Bacteria</taxon>
        <taxon>Pseudomonadati</taxon>
        <taxon>Pseudomonadota</taxon>
        <taxon>Gammaproteobacteria</taxon>
        <taxon>Pseudomonadales</taxon>
        <taxon>Pseudomonadaceae</taxon>
        <taxon>Pseudomonas</taxon>
    </lineage>
</organism>